<organism>
    <name type="scientific">Homo sapiens</name>
    <name type="common">Human</name>
    <dbReference type="NCBI Taxonomy" id="9606"/>
    <lineage>
        <taxon>Eukaryota</taxon>
        <taxon>Metazoa</taxon>
        <taxon>Chordata</taxon>
        <taxon>Craniata</taxon>
        <taxon>Vertebrata</taxon>
        <taxon>Euteleostomi</taxon>
        <taxon>Mammalia</taxon>
        <taxon>Eutheria</taxon>
        <taxon>Euarchontoglires</taxon>
        <taxon>Primates</taxon>
        <taxon>Haplorrhini</taxon>
        <taxon>Catarrhini</taxon>
        <taxon>Hominidae</taxon>
        <taxon>Homo</taxon>
    </lineage>
</organism>
<sequence length="337" mass="37423">MLRNNLGNSSDSKNEDGSVFSQTEHNIVATYLIMAGMISIISNIIVLGIFIKYKELRTPTNAIIINLAVTDIGVSSIGYPMSAASDLYGSWKFGYAGCQVYAGLNIFFGMASIGLLTVVAVDRYLTICLPDVGRRMTTNTYIGLILGAWINGLFWALMPIIGWASYAPDPTGATCTINWRKNDRSFVSYTMTVIAINFIVPLTVMFYCYYHVTLSIKHHTTSDCTESLNRDWSDQIDVTKMSVIMICMFLVAWSPYSIVCLWASFGDPKKIPPPMAIIAPLFAKSSTFYNPCIYVVANKKFRRAMLAMFKCQTHQTMPVTSILPMDVSQNPLASGRI</sequence>
<dbReference type="EMBL" id="AF012270">
    <property type="protein sequence ID" value="AAC51757.1"/>
    <property type="molecule type" value="mRNA"/>
</dbReference>
<dbReference type="EMBL" id="CH471057">
    <property type="protein sequence ID" value="EAX06255.1"/>
    <property type="molecule type" value="Genomic_DNA"/>
</dbReference>
<dbReference type="EMBL" id="BC128120">
    <property type="protein sequence ID" value="AAI28121.1"/>
    <property type="molecule type" value="mRNA"/>
</dbReference>
<dbReference type="EMBL" id="BC128121">
    <property type="protein sequence ID" value="AAI28122.1"/>
    <property type="molecule type" value="mRNA"/>
</dbReference>
<dbReference type="EMBL" id="BC128401">
    <property type="protein sequence ID" value="AAI28402.1"/>
    <property type="molecule type" value="mRNA"/>
</dbReference>
<dbReference type="EMBL" id="BK000958">
    <property type="protein sequence ID" value="DAA00976.1"/>
    <property type="molecule type" value="Genomic_DNA"/>
</dbReference>
<dbReference type="CCDS" id="CCDS3687.1"/>
<dbReference type="RefSeq" id="NP_006574.1">
    <property type="nucleotide sequence ID" value="NM_006583.5"/>
</dbReference>
<dbReference type="SMR" id="O14718"/>
<dbReference type="BioGRID" id="115931">
    <property type="interactions" value="1"/>
</dbReference>
<dbReference type="FunCoup" id="O14718">
    <property type="interactions" value="293"/>
</dbReference>
<dbReference type="IntAct" id="O14718">
    <property type="interactions" value="1"/>
</dbReference>
<dbReference type="STRING" id="9606.ENSP00000314992"/>
<dbReference type="GlyCosmos" id="O14718">
    <property type="glycosylation" value="1 site, No reported glycans"/>
</dbReference>
<dbReference type="GlyGen" id="O14718">
    <property type="glycosylation" value="2 sites"/>
</dbReference>
<dbReference type="PhosphoSitePlus" id="O14718"/>
<dbReference type="BioMuta" id="RRH"/>
<dbReference type="jPOST" id="O14718"/>
<dbReference type="MassIVE" id="O14718"/>
<dbReference type="PaxDb" id="9606-ENSP00000314992"/>
<dbReference type="PeptideAtlas" id="O14718"/>
<dbReference type="ProteomicsDB" id="48181"/>
<dbReference type="Antibodypedia" id="15375">
    <property type="antibodies" value="146 antibodies from 26 providers"/>
</dbReference>
<dbReference type="DNASU" id="10692"/>
<dbReference type="Ensembl" id="ENST00000317735.7">
    <property type="protein sequence ID" value="ENSP00000314992.4"/>
    <property type="gene ID" value="ENSG00000180245.7"/>
</dbReference>
<dbReference type="GeneID" id="10692"/>
<dbReference type="KEGG" id="hsa:10692"/>
<dbReference type="MANE-Select" id="ENST00000317735.7">
    <property type="protein sequence ID" value="ENSP00000314992.4"/>
    <property type="RefSeq nucleotide sequence ID" value="NM_006583.5"/>
    <property type="RefSeq protein sequence ID" value="NP_006574.1"/>
</dbReference>
<dbReference type="UCSC" id="uc003hzv.4">
    <property type="organism name" value="human"/>
</dbReference>
<dbReference type="AGR" id="HGNC:10450"/>
<dbReference type="CTD" id="10692"/>
<dbReference type="DisGeNET" id="10692"/>
<dbReference type="GeneCards" id="RRH"/>
<dbReference type="HGNC" id="HGNC:10450">
    <property type="gene designation" value="RRH"/>
</dbReference>
<dbReference type="HPA" id="ENSG00000180245">
    <property type="expression patterns" value="Tissue enriched (retina)"/>
</dbReference>
<dbReference type="MIM" id="605224">
    <property type="type" value="gene"/>
</dbReference>
<dbReference type="neXtProt" id="NX_O14718"/>
<dbReference type="OpenTargets" id="ENSG00000180245"/>
<dbReference type="PharmGKB" id="PA34865"/>
<dbReference type="VEuPathDB" id="HostDB:ENSG00000180245"/>
<dbReference type="eggNOG" id="KOG3656">
    <property type="taxonomic scope" value="Eukaryota"/>
</dbReference>
<dbReference type="GeneTree" id="ENSGT01120000271854"/>
<dbReference type="HOGENOM" id="CLU_009579_3_0_1"/>
<dbReference type="InParanoid" id="O14718"/>
<dbReference type="OMA" id="MHWNDSS"/>
<dbReference type="OrthoDB" id="2105199at2759"/>
<dbReference type="PAN-GO" id="O14718">
    <property type="GO annotations" value="6 GO annotations based on evolutionary models"/>
</dbReference>
<dbReference type="PhylomeDB" id="O14718"/>
<dbReference type="TreeFam" id="TF324998"/>
<dbReference type="PathwayCommons" id="O14718"/>
<dbReference type="Reactome" id="R-HSA-418594">
    <property type="pathway name" value="G alpha (i) signalling events"/>
</dbReference>
<dbReference type="Reactome" id="R-HSA-419771">
    <property type="pathway name" value="Opsins"/>
</dbReference>
<dbReference type="SignaLink" id="O14718"/>
<dbReference type="BioGRID-ORCS" id="10692">
    <property type="hits" value="16 hits in 1139 CRISPR screens"/>
</dbReference>
<dbReference type="GeneWiki" id="RRH"/>
<dbReference type="GenomeRNAi" id="10692"/>
<dbReference type="Pharos" id="O14718">
    <property type="development level" value="Tbio"/>
</dbReference>
<dbReference type="PRO" id="PR:O14718"/>
<dbReference type="Proteomes" id="UP000005640">
    <property type="component" value="Chromosome 4"/>
</dbReference>
<dbReference type="RNAct" id="O14718">
    <property type="molecule type" value="protein"/>
</dbReference>
<dbReference type="Bgee" id="ENSG00000180245">
    <property type="expression patterns" value="Expressed in male germ line stem cell (sensu Vertebrata) in testis and 97 other cell types or tissues"/>
</dbReference>
<dbReference type="ExpressionAtlas" id="O14718">
    <property type="expression patterns" value="baseline and differential"/>
</dbReference>
<dbReference type="GO" id="GO:0005886">
    <property type="term" value="C:plasma membrane"/>
    <property type="evidence" value="ECO:0000318"/>
    <property type="project" value="GO_Central"/>
</dbReference>
<dbReference type="GO" id="GO:0008020">
    <property type="term" value="F:G protein-coupled photoreceptor activity"/>
    <property type="evidence" value="ECO:0000318"/>
    <property type="project" value="GO_Central"/>
</dbReference>
<dbReference type="GO" id="GO:0004930">
    <property type="term" value="F:G protein-coupled receptor activity"/>
    <property type="evidence" value="ECO:0000304"/>
    <property type="project" value="ProtInc"/>
</dbReference>
<dbReference type="GO" id="GO:0071482">
    <property type="term" value="P:cellular response to light stimulus"/>
    <property type="evidence" value="ECO:0000318"/>
    <property type="project" value="GO_Central"/>
</dbReference>
<dbReference type="GO" id="GO:0007186">
    <property type="term" value="P:G protein-coupled receptor signaling pathway"/>
    <property type="evidence" value="ECO:0000318"/>
    <property type="project" value="GO_Central"/>
</dbReference>
<dbReference type="GO" id="GO:0007602">
    <property type="term" value="P:phototransduction"/>
    <property type="evidence" value="ECO:0000318"/>
    <property type="project" value="GO_Central"/>
</dbReference>
<dbReference type="GO" id="GO:0007601">
    <property type="term" value="P:visual perception"/>
    <property type="evidence" value="ECO:0000304"/>
    <property type="project" value="ProtInc"/>
</dbReference>
<dbReference type="CDD" id="cd15073">
    <property type="entry name" value="7tmA_Peropsin"/>
    <property type="match status" value="1"/>
</dbReference>
<dbReference type="FunFam" id="1.20.1070.10:FF:000169">
    <property type="entry name" value="Retinal pigment epithelium-derived rhodopsin homolog"/>
    <property type="match status" value="1"/>
</dbReference>
<dbReference type="Gene3D" id="1.20.1070.10">
    <property type="entry name" value="Rhodopsin 7-helix transmembrane proteins"/>
    <property type="match status" value="1"/>
</dbReference>
<dbReference type="InterPro" id="IPR050125">
    <property type="entry name" value="GPCR_opsins"/>
</dbReference>
<dbReference type="InterPro" id="IPR000276">
    <property type="entry name" value="GPCR_Rhodpsn"/>
</dbReference>
<dbReference type="InterPro" id="IPR017452">
    <property type="entry name" value="GPCR_Rhodpsn_7TM"/>
</dbReference>
<dbReference type="InterPro" id="IPR002962">
    <property type="entry name" value="Peropsin"/>
</dbReference>
<dbReference type="InterPro" id="IPR027430">
    <property type="entry name" value="Retinal_BS"/>
</dbReference>
<dbReference type="PANTHER" id="PTHR24240">
    <property type="entry name" value="OPSIN"/>
    <property type="match status" value="1"/>
</dbReference>
<dbReference type="Pfam" id="PF00001">
    <property type="entry name" value="7tm_1"/>
    <property type="match status" value="1"/>
</dbReference>
<dbReference type="PRINTS" id="PR00237">
    <property type="entry name" value="GPCRRHODOPSN"/>
</dbReference>
<dbReference type="PRINTS" id="PR01244">
    <property type="entry name" value="PEROPSIN"/>
</dbReference>
<dbReference type="SMART" id="SM01381">
    <property type="entry name" value="7TM_GPCR_Srsx"/>
    <property type="match status" value="1"/>
</dbReference>
<dbReference type="SUPFAM" id="SSF81321">
    <property type="entry name" value="Family A G protein-coupled receptor-like"/>
    <property type="match status" value="1"/>
</dbReference>
<dbReference type="PROSITE" id="PS00237">
    <property type="entry name" value="G_PROTEIN_RECEP_F1_1"/>
    <property type="match status" value="1"/>
</dbReference>
<dbReference type="PROSITE" id="PS50262">
    <property type="entry name" value="G_PROTEIN_RECEP_F1_2"/>
    <property type="match status" value="1"/>
</dbReference>
<dbReference type="PROSITE" id="PS00238">
    <property type="entry name" value="OPSIN"/>
    <property type="match status" value="1"/>
</dbReference>
<evidence type="ECO:0000250" key="1"/>
<evidence type="ECO:0000255" key="2"/>
<evidence type="ECO:0000255" key="3">
    <source>
        <dbReference type="PROSITE-ProRule" id="PRU00521"/>
    </source>
</evidence>
<keyword id="KW-0157">Chromophore</keyword>
<keyword id="KW-1015">Disulfide bond</keyword>
<keyword id="KW-0297">G-protein coupled receptor</keyword>
<keyword id="KW-0325">Glycoprotein</keyword>
<keyword id="KW-0472">Membrane</keyword>
<keyword id="KW-0600">Photoreceptor protein</keyword>
<keyword id="KW-1267">Proteomics identification</keyword>
<keyword id="KW-0675">Receptor</keyword>
<keyword id="KW-1185">Reference proteome</keyword>
<keyword id="KW-0681">Retinal protein</keyword>
<keyword id="KW-0716">Sensory transduction</keyword>
<keyword id="KW-0807">Transducer</keyword>
<keyword id="KW-0812">Transmembrane</keyword>
<keyword id="KW-1133">Transmembrane helix</keyword>
<comment type="function">
    <text>May play a role in rpe physiology either by detecting light directly or by monitoring the concentration of retinoids or other photoreceptor-derived compounds.</text>
</comment>
<comment type="interaction">
    <interactant intactId="EBI-12855824">
        <id>O14718</id>
    </interactant>
    <interactant intactId="EBI-7101695">
        <id>Q9Y328</id>
        <label>NSG2</label>
    </interactant>
    <organismsDiffer>false</organismsDiffer>
    <experiments>3</experiments>
</comment>
<comment type="subcellular location">
    <subcellularLocation>
        <location evidence="1">Membrane</location>
        <topology evidence="1">Multi-pass membrane protein</topology>
    </subcellularLocation>
</comment>
<comment type="tissue specificity">
    <text>Found only in the eye, where it is localized to the retinal pigment epithelium (RPE). In the RPE, it is localized to the microvilli that surround the photoreceptor outer segments.</text>
</comment>
<comment type="similarity">
    <text evidence="3">Belongs to the G-protein coupled receptor 1 family. Opsin subfamily.</text>
</comment>
<proteinExistence type="evidence at protein level"/>
<accession>O14718</accession>
<accession>A1A4V2</accession>
<accession>Q7RTS4</accession>
<name>OPSX_HUMAN</name>
<gene>
    <name type="primary">RRH</name>
</gene>
<reference key="1">
    <citation type="journal article" date="1997" name="Proc. Natl. Acad. Sci. U.S.A.">
        <title>Peropsin, a novel visual pigment-like protein located in the apical microvilli of the retinal pigment epithelium.</title>
        <authorList>
            <person name="Sun H."/>
            <person name="Gilbert D.J."/>
            <person name="Copeland N.G."/>
            <person name="Jenkins N.A."/>
            <person name="Nathans J."/>
        </authorList>
    </citation>
    <scope>NUCLEOTIDE SEQUENCE [MRNA]</scope>
    <source>
        <tissue>Retina</tissue>
    </source>
</reference>
<reference key="2">
    <citation type="submission" date="2005-07" db="EMBL/GenBank/DDBJ databases">
        <authorList>
            <person name="Mural R.J."/>
            <person name="Istrail S."/>
            <person name="Sutton G.G."/>
            <person name="Florea L."/>
            <person name="Halpern A.L."/>
            <person name="Mobarry C.M."/>
            <person name="Lippert R."/>
            <person name="Walenz B."/>
            <person name="Shatkay H."/>
            <person name="Dew I."/>
            <person name="Miller J.R."/>
            <person name="Flanigan M.J."/>
            <person name="Edwards N.J."/>
            <person name="Bolanos R."/>
            <person name="Fasulo D."/>
            <person name="Halldorsson B.V."/>
            <person name="Hannenhalli S."/>
            <person name="Turner R."/>
            <person name="Yooseph S."/>
            <person name="Lu F."/>
            <person name="Nusskern D.R."/>
            <person name="Shue B.C."/>
            <person name="Zheng X.H."/>
            <person name="Zhong F."/>
            <person name="Delcher A.L."/>
            <person name="Huson D.H."/>
            <person name="Kravitz S.A."/>
            <person name="Mouchard L."/>
            <person name="Reinert K."/>
            <person name="Remington K.A."/>
            <person name="Clark A.G."/>
            <person name="Waterman M.S."/>
            <person name="Eichler E.E."/>
            <person name="Adams M.D."/>
            <person name="Hunkapiller M.W."/>
            <person name="Myers E.W."/>
            <person name="Venter J.C."/>
        </authorList>
    </citation>
    <scope>NUCLEOTIDE SEQUENCE [LARGE SCALE GENOMIC DNA]</scope>
</reference>
<reference key="3">
    <citation type="journal article" date="2004" name="Genome Res.">
        <title>The status, quality, and expansion of the NIH full-length cDNA project: the Mammalian Gene Collection (MGC).</title>
        <authorList>
            <consortium name="The MGC Project Team"/>
        </authorList>
    </citation>
    <scope>NUCLEOTIDE SEQUENCE [LARGE SCALE MRNA]</scope>
</reference>
<reference key="4">
    <citation type="journal article" date="2003" name="BMC Genomics">
        <title>In silico characterisation and chromosomal localisation of human RRH (peropsin) -- implications for opsin evolution.</title>
        <authorList>
            <person name="Bellingham J."/>
            <person name="Wells D.J."/>
            <person name="Foster R.G."/>
        </authorList>
    </citation>
    <scope>GENE STRUCTURE</scope>
</reference>
<feature type="chain" id="PRO_0000197819" description="Visual pigment-like receptor peropsin">
    <location>
        <begin position="1"/>
        <end position="337"/>
    </location>
</feature>
<feature type="topological domain" description="Extracellular">
    <location>
        <begin position="1"/>
        <end position="26"/>
    </location>
</feature>
<feature type="transmembrane region" description="Helical; Name=1" evidence="2">
    <location>
        <begin position="27"/>
        <end position="49"/>
    </location>
</feature>
<feature type="topological domain" description="Cytoplasmic">
    <location>
        <begin position="50"/>
        <end position="61"/>
    </location>
</feature>
<feature type="transmembrane region" description="Helical; Name=2" evidence="2">
    <location>
        <begin position="62"/>
        <end position="87"/>
    </location>
</feature>
<feature type="topological domain" description="Extracellular">
    <location>
        <begin position="88"/>
        <end position="101"/>
    </location>
</feature>
<feature type="transmembrane region" description="Helical; Name=3" evidence="2">
    <location>
        <begin position="102"/>
        <end position="121"/>
    </location>
</feature>
<feature type="topological domain" description="Cytoplasmic">
    <location>
        <begin position="122"/>
        <end position="140"/>
    </location>
</feature>
<feature type="transmembrane region" description="Helical; Name=4" evidence="2">
    <location>
        <begin position="141"/>
        <end position="164"/>
    </location>
</feature>
<feature type="topological domain" description="Extracellular">
    <location>
        <begin position="165"/>
        <end position="188"/>
    </location>
</feature>
<feature type="transmembrane region" description="Helical; Name=5" evidence="2">
    <location>
        <begin position="189"/>
        <end position="212"/>
    </location>
</feature>
<feature type="topological domain" description="Cytoplasmic">
    <location>
        <begin position="213"/>
        <end position="240"/>
    </location>
</feature>
<feature type="transmembrane region" description="Helical; Name=6" evidence="2">
    <location>
        <begin position="241"/>
        <end position="264"/>
    </location>
</feature>
<feature type="topological domain" description="Extracellular">
    <location>
        <begin position="265"/>
        <end position="272"/>
    </location>
</feature>
<feature type="transmembrane region" description="Helical; Name=7" evidence="2">
    <location>
        <begin position="273"/>
        <end position="297"/>
    </location>
</feature>
<feature type="topological domain" description="Cytoplasmic">
    <location>
        <begin position="298"/>
        <end position="337"/>
    </location>
</feature>
<feature type="modified residue" description="N6-(retinylidene)lysine">
    <location>
        <position position="284"/>
    </location>
</feature>
<feature type="glycosylation site" description="N-linked (GlcNAc...) asparagine" evidence="2">
    <location>
        <position position="8"/>
    </location>
</feature>
<feature type="disulfide bond" evidence="3">
    <location>
        <begin position="98"/>
        <end position="175"/>
    </location>
</feature>
<protein>
    <recommendedName>
        <fullName>Visual pigment-like receptor peropsin</fullName>
    </recommendedName>
</protein>